<keyword id="KW-0002">3D-structure</keyword>
<keyword id="KW-1185">Reference proteome</keyword>
<keyword id="KW-0678">Repressor</keyword>
<keyword id="KW-0687">Ribonucleoprotein</keyword>
<keyword id="KW-0689">Ribosomal protein</keyword>
<keyword id="KW-0694">RNA-binding</keyword>
<keyword id="KW-0699">rRNA-binding</keyword>
<keyword id="KW-0810">Translation regulation</keyword>
<keyword id="KW-0820">tRNA-binding</keyword>
<name>RL1_METJA</name>
<proteinExistence type="evidence at protein level"/>
<feature type="chain" id="PRO_0000125798" description="Large ribosomal subunit protein uL1">
    <location>
        <begin position="1"/>
        <end position="219"/>
    </location>
</feature>
<feature type="helix" evidence="5">
    <location>
        <begin position="3"/>
        <end position="16"/>
    </location>
</feature>
<feature type="strand" evidence="5">
    <location>
        <begin position="25"/>
        <end position="34"/>
    </location>
</feature>
<feature type="helix" evidence="5">
    <location>
        <begin position="40"/>
        <end position="42"/>
    </location>
</feature>
<feature type="strand" evidence="5">
    <location>
        <begin position="45"/>
        <end position="49"/>
    </location>
</feature>
<feature type="strand" evidence="5">
    <location>
        <begin position="60"/>
        <end position="63"/>
    </location>
</feature>
<feature type="helix" evidence="5">
    <location>
        <begin position="66"/>
        <end position="74"/>
    </location>
</feature>
<feature type="strand" evidence="5">
    <location>
        <begin position="78"/>
        <end position="80"/>
    </location>
</feature>
<feature type="helix" evidence="5">
    <location>
        <begin position="82"/>
        <end position="90"/>
    </location>
</feature>
<feature type="helix" evidence="5">
    <location>
        <begin position="92"/>
        <end position="101"/>
    </location>
</feature>
<feature type="strand" evidence="5">
    <location>
        <begin position="103"/>
        <end position="108"/>
    </location>
</feature>
<feature type="helix" evidence="5">
    <location>
        <begin position="109"/>
        <end position="111"/>
    </location>
</feature>
<feature type="helix" evidence="5">
    <location>
        <begin position="112"/>
        <end position="118"/>
    </location>
</feature>
<feature type="helix" evidence="5">
    <location>
        <begin position="120"/>
        <end position="123"/>
    </location>
</feature>
<feature type="helix" evidence="5">
    <location>
        <begin position="124"/>
        <end position="126"/>
    </location>
</feature>
<feature type="strand" evidence="5">
    <location>
        <begin position="131"/>
        <end position="133"/>
    </location>
</feature>
<feature type="helix" evidence="5">
    <location>
        <begin position="140"/>
        <end position="146"/>
    </location>
</feature>
<feature type="strand" evidence="5">
    <location>
        <begin position="149"/>
        <end position="153"/>
    </location>
</feature>
<feature type="strand" evidence="5">
    <location>
        <begin position="157"/>
        <end position="166"/>
    </location>
</feature>
<feature type="helix" evidence="5">
    <location>
        <begin position="171"/>
        <end position="188"/>
    </location>
</feature>
<feature type="helix" evidence="5">
    <location>
        <begin position="192"/>
        <end position="195"/>
    </location>
</feature>
<feature type="strand" evidence="5">
    <location>
        <begin position="196"/>
        <end position="203"/>
    </location>
</feature>
<comment type="function">
    <text evidence="1">Probably involved in E site tRNA release (By similarity). Binds directly to 23S rRNA.</text>
</comment>
<comment type="function">
    <text evidence="2">Protein L1 is also a translational repressor protein, it controls the translation of its operon by binding to its mRNA.</text>
</comment>
<comment type="subunit">
    <text evidence="2 3">Part of the 50S ribosomal subunit.</text>
</comment>
<comment type="similarity">
    <text evidence="2">Belongs to the universal ribosomal protein uL1 family.</text>
</comment>
<comment type="sequence caution" evidence="4">
    <conflict type="erroneous initiation">
        <sequence resource="EMBL-CDS" id="AAB98500"/>
    </conflict>
</comment>
<accession>P54050</accession>
<evidence type="ECO:0000250" key="1"/>
<evidence type="ECO:0000255" key="2">
    <source>
        <dbReference type="HAMAP-Rule" id="MF_01318"/>
    </source>
</evidence>
<evidence type="ECO:0000269" key="3">
    <source>
    </source>
</evidence>
<evidence type="ECO:0000305" key="4"/>
<evidence type="ECO:0007829" key="5">
    <source>
        <dbReference type="PDB" id="4LQ4"/>
    </source>
</evidence>
<dbReference type="EMBL" id="L77117">
    <property type="protein sequence ID" value="AAB98500.1"/>
    <property type="status" value="ALT_INIT"/>
    <property type="molecule type" value="Genomic_DNA"/>
</dbReference>
<dbReference type="PIR" id="F64363">
    <property type="entry name" value="F64363"/>
</dbReference>
<dbReference type="RefSeq" id="WP_064496520.1">
    <property type="nucleotide sequence ID" value="NC_000909.1"/>
</dbReference>
<dbReference type="PDB" id="1CJS">
    <property type="method" value="X-ray"/>
    <property type="resolution" value="2.30 A"/>
    <property type="chains" value="A=1-219"/>
</dbReference>
<dbReference type="PDB" id="1I2A">
    <property type="method" value="X-ray"/>
    <property type="resolution" value="1.85 A"/>
    <property type="chains" value="A=1-219"/>
</dbReference>
<dbReference type="PDB" id="1U63">
    <property type="method" value="X-ray"/>
    <property type="resolution" value="3.40 A"/>
    <property type="chains" value="A/C=1-219"/>
</dbReference>
<dbReference type="PDB" id="4LQ4">
    <property type="method" value="X-ray"/>
    <property type="resolution" value="1.75 A"/>
    <property type="chains" value="A=1-211"/>
</dbReference>
<dbReference type="PDBsum" id="1CJS"/>
<dbReference type="PDBsum" id="1I2A"/>
<dbReference type="PDBsum" id="1U63"/>
<dbReference type="PDBsum" id="4LQ4"/>
<dbReference type="SMR" id="P54050"/>
<dbReference type="FunCoup" id="P54050">
    <property type="interactions" value="153"/>
</dbReference>
<dbReference type="STRING" id="243232.MJ_0510"/>
<dbReference type="PaxDb" id="243232-MJ_0510"/>
<dbReference type="EnsemblBacteria" id="AAB98500">
    <property type="protein sequence ID" value="AAB98500"/>
    <property type="gene ID" value="MJ_0510"/>
</dbReference>
<dbReference type="GeneID" id="1451372"/>
<dbReference type="KEGG" id="mja:MJ_0510"/>
<dbReference type="eggNOG" id="arCOG04289">
    <property type="taxonomic scope" value="Archaea"/>
</dbReference>
<dbReference type="HOGENOM" id="CLU_062853_4_0_2"/>
<dbReference type="InParanoid" id="P54050"/>
<dbReference type="OrthoDB" id="10382at2157"/>
<dbReference type="PhylomeDB" id="P54050"/>
<dbReference type="EvolutionaryTrace" id="P54050"/>
<dbReference type="Proteomes" id="UP000000805">
    <property type="component" value="Chromosome"/>
</dbReference>
<dbReference type="GO" id="GO:0015934">
    <property type="term" value="C:large ribosomal subunit"/>
    <property type="evidence" value="ECO:0007669"/>
    <property type="project" value="InterPro"/>
</dbReference>
<dbReference type="GO" id="GO:0019843">
    <property type="term" value="F:rRNA binding"/>
    <property type="evidence" value="ECO:0007669"/>
    <property type="project" value="UniProtKB-UniRule"/>
</dbReference>
<dbReference type="GO" id="GO:0003735">
    <property type="term" value="F:structural constituent of ribosome"/>
    <property type="evidence" value="ECO:0007669"/>
    <property type="project" value="InterPro"/>
</dbReference>
<dbReference type="GO" id="GO:0000049">
    <property type="term" value="F:tRNA binding"/>
    <property type="evidence" value="ECO:0007669"/>
    <property type="project" value="UniProtKB-KW"/>
</dbReference>
<dbReference type="GO" id="GO:0006417">
    <property type="term" value="P:regulation of translation"/>
    <property type="evidence" value="ECO:0007669"/>
    <property type="project" value="UniProtKB-KW"/>
</dbReference>
<dbReference type="GO" id="GO:0006412">
    <property type="term" value="P:translation"/>
    <property type="evidence" value="ECO:0007669"/>
    <property type="project" value="UniProtKB-UniRule"/>
</dbReference>
<dbReference type="CDD" id="cd00403">
    <property type="entry name" value="Ribosomal_L1"/>
    <property type="match status" value="1"/>
</dbReference>
<dbReference type="FunFam" id="3.40.50.790:FF:000005">
    <property type="entry name" value="50S ribosomal protein L1"/>
    <property type="match status" value="1"/>
</dbReference>
<dbReference type="Gene3D" id="3.30.190.20">
    <property type="match status" value="1"/>
</dbReference>
<dbReference type="Gene3D" id="3.40.50.790">
    <property type="match status" value="1"/>
</dbReference>
<dbReference type="HAMAP" id="MF_01318_A">
    <property type="entry name" value="Ribosomal_uL1_A"/>
    <property type="match status" value="1"/>
</dbReference>
<dbReference type="InterPro" id="IPR002143">
    <property type="entry name" value="Ribosomal_uL1"/>
</dbReference>
<dbReference type="InterPro" id="IPR023674">
    <property type="entry name" value="Ribosomal_uL1-like"/>
</dbReference>
<dbReference type="InterPro" id="IPR028364">
    <property type="entry name" value="Ribosomal_uL1/biogenesis"/>
</dbReference>
<dbReference type="InterPro" id="IPR016095">
    <property type="entry name" value="Ribosomal_uL1_3-a/b-sand"/>
</dbReference>
<dbReference type="InterPro" id="IPR023669">
    <property type="entry name" value="Ribosomal_uL1_arc"/>
</dbReference>
<dbReference type="InterPro" id="IPR023673">
    <property type="entry name" value="Ribosomal_uL1_CS"/>
</dbReference>
<dbReference type="NCBIfam" id="NF003244">
    <property type="entry name" value="PRK04203.1"/>
    <property type="match status" value="1"/>
</dbReference>
<dbReference type="PANTHER" id="PTHR36427">
    <property type="entry name" value="54S RIBOSOMAL PROTEIN L1, MITOCHONDRIAL"/>
    <property type="match status" value="1"/>
</dbReference>
<dbReference type="PANTHER" id="PTHR36427:SF3">
    <property type="entry name" value="LARGE RIBOSOMAL SUBUNIT PROTEIN UL1M"/>
    <property type="match status" value="1"/>
</dbReference>
<dbReference type="Pfam" id="PF00687">
    <property type="entry name" value="Ribosomal_L1"/>
    <property type="match status" value="1"/>
</dbReference>
<dbReference type="PIRSF" id="PIRSF002155">
    <property type="entry name" value="Ribosomal_L1"/>
    <property type="match status" value="1"/>
</dbReference>
<dbReference type="SUPFAM" id="SSF56808">
    <property type="entry name" value="Ribosomal protein L1"/>
    <property type="match status" value="1"/>
</dbReference>
<dbReference type="PROSITE" id="PS01199">
    <property type="entry name" value="RIBOSOMAL_L1"/>
    <property type="match status" value="1"/>
</dbReference>
<protein>
    <recommendedName>
        <fullName evidence="2">Large ribosomal subunit protein uL1</fullName>
    </recommendedName>
    <alternativeName>
        <fullName evidence="4">50S ribosomal protein L1</fullName>
    </alternativeName>
</protein>
<gene>
    <name evidence="2" type="primary">rpl1</name>
    <name type="ordered locus">MJ0510</name>
</gene>
<reference key="1">
    <citation type="journal article" date="1996" name="Science">
        <title>Complete genome sequence of the methanogenic archaeon, Methanococcus jannaschii.</title>
        <authorList>
            <person name="Bult C.J."/>
            <person name="White O."/>
            <person name="Olsen G.J."/>
            <person name="Zhou L."/>
            <person name="Fleischmann R.D."/>
            <person name="Sutton G.G."/>
            <person name="Blake J.A."/>
            <person name="FitzGerald L.M."/>
            <person name="Clayton R.A."/>
            <person name="Gocayne J.D."/>
            <person name="Kerlavage A.R."/>
            <person name="Dougherty B.A."/>
            <person name="Tomb J.-F."/>
            <person name="Adams M.D."/>
            <person name="Reich C.I."/>
            <person name="Overbeek R."/>
            <person name="Kirkness E.F."/>
            <person name="Weinstock K.G."/>
            <person name="Merrick J.M."/>
            <person name="Glodek A."/>
            <person name="Scott J.L."/>
            <person name="Geoghagen N.S.M."/>
            <person name="Weidman J.F."/>
            <person name="Fuhrmann J.L."/>
            <person name="Nguyen D."/>
            <person name="Utterback T.R."/>
            <person name="Kelley J.M."/>
            <person name="Peterson J.D."/>
            <person name="Sadow P.W."/>
            <person name="Hanna M.C."/>
            <person name="Cotton M.D."/>
            <person name="Roberts K.M."/>
            <person name="Hurst M.A."/>
            <person name="Kaine B.P."/>
            <person name="Borodovsky M."/>
            <person name="Klenk H.-P."/>
            <person name="Fraser C.M."/>
            <person name="Smith H.O."/>
            <person name="Woese C.R."/>
            <person name="Venter J.C."/>
        </authorList>
    </citation>
    <scope>NUCLEOTIDE SEQUENCE [LARGE SCALE GENOMIC DNA]</scope>
    <source>
        <strain>ATCC 43067 / DSM 2661 / JAL-1 / JCM 10045 / NBRC 100440</strain>
    </source>
</reference>
<reference key="2">
    <citation type="journal article" date="1998" name="Eur. J. Biochem.">
        <title>Interaction of ribosomal L1 proteins from mesophilic and thermophilic Archaea and Bacteria with specific L1-binding sites on 23S rRNA and mRNA.</title>
        <authorList>
            <person name="Koehrer C."/>
            <person name="Mayer C."/>
            <person name="Neumair O."/>
            <person name="Groebner P."/>
            <person name="Piendl W."/>
        </authorList>
    </citation>
    <scope>BINDING TO ENDOGENOUS 23S RRNA</scope>
    <scope>BINDING TO METHANOCOCCUS VANNIELII L1 MRNA</scope>
</reference>
<reference key="3">
    <citation type="journal article" date="2000" name="Structure">
        <title>Archaeal ribosomal protein L1: the structure provides new insights into RNA binding of the L1 protein family.</title>
        <authorList>
            <person name="Nevskaya N."/>
            <person name="Tischenko S."/>
            <person name="Fedorov R."/>
            <person name="Al-Karadaghi S."/>
            <person name="Liljas A."/>
            <person name="Kraft A."/>
            <person name="Piendl W."/>
            <person name="Garber M.B."/>
            <person name="Nikonov S."/>
        </authorList>
    </citation>
    <scope>X-RAY CRYSTALLOGRAPHY (2.3 ANGSTROMS)</scope>
</reference>
<reference key="4">
    <citation type="journal article" date="2002" name="Acta Crystallogr. D">
        <title>Structure of ribosomal protein L1 from Methanococcus thermolithotrophicus. Functionally important structural invariants on the L1 surface.</title>
        <authorList>
            <person name="Nevskaya N."/>
            <person name="Tishchenko S."/>
            <person name="Paveliev M."/>
            <person name="Smolinskaya Y."/>
            <person name="Fedorov R."/>
            <person name="Piendl W."/>
            <person name="Nakamura Y."/>
            <person name="Toyoda T."/>
            <person name="Garber M.B."/>
            <person name="Nikonov S."/>
        </authorList>
    </citation>
    <scope>X-RAY CRYSTALLOGRAPHY (1.85 ANGSTROMS)</scope>
</reference>
<reference key="5">
    <citation type="journal article" date="2005" name="Nucleic Acids Res.">
        <title>Ribosomal protein L1 recognizes the same specific structural motif in its target sites on the autoregulatory mRNA and 23S rRNA.</title>
        <authorList>
            <person name="Nevskaya N."/>
            <person name="Tishchenko S."/>
            <person name="Gabdoulkhakov A."/>
            <person name="Nikonova E."/>
            <person name="Nikonov O."/>
            <person name="Nikulin A."/>
            <person name="Platonova O."/>
            <person name="Garber M.B."/>
            <person name="Nikonov S."/>
            <person name="Piendl W."/>
        </authorList>
    </citation>
    <scope>X-RAY CRYSTALLOGRAPHY (3.4 ANGSTROMS) IN COMPLEX WITH AN ENDOGENOUS L1 MRNA FRAGMENT</scope>
</reference>
<sequence>MDREALLQAVKEARELAKPRNFTQSFEFIATLKEIDMRKPENRIKTEVVLPHGRGKEAKIAVIGTGDLAKQAEELGLTVIRKEEIEELGKNKRKLRKIAKAHDFFIAQADLMPLIGRYMGVILGPRGKMPKPVPANANIKPLVERLKKTVVINTRDKPYFQVLVGNEKMTDEQIVDNIEAVLNVVAKKYEKGLYHIKDAYVKLTMGPAVKVKKEKAKKK</sequence>
<organism>
    <name type="scientific">Methanocaldococcus jannaschii (strain ATCC 43067 / DSM 2661 / JAL-1 / JCM 10045 / NBRC 100440)</name>
    <name type="common">Methanococcus jannaschii</name>
    <dbReference type="NCBI Taxonomy" id="243232"/>
    <lineage>
        <taxon>Archaea</taxon>
        <taxon>Methanobacteriati</taxon>
        <taxon>Methanobacteriota</taxon>
        <taxon>Methanomada group</taxon>
        <taxon>Methanococci</taxon>
        <taxon>Methanococcales</taxon>
        <taxon>Methanocaldococcaceae</taxon>
        <taxon>Methanocaldococcus</taxon>
    </lineage>
</organism>